<protein>
    <recommendedName>
        <fullName evidence="1">Endo-type membrane-bound lytic murein transglycosylase A</fullName>
        <ecNumber evidence="1">4.2.2.n2</ecNumber>
    </recommendedName>
    <alternativeName>
        <fullName evidence="1">Peptidoglycan lytic endotransglycosylase</fullName>
    </alternativeName>
</protein>
<reference key="1">
    <citation type="journal article" date="2008" name="PLoS Genet.">
        <title>Complete genome sequence of the N2-fixing broad host range endophyte Klebsiella pneumoniae 342 and virulence predictions verified in mice.</title>
        <authorList>
            <person name="Fouts D.E."/>
            <person name="Tyler H.L."/>
            <person name="DeBoy R.T."/>
            <person name="Daugherty S."/>
            <person name="Ren Q."/>
            <person name="Badger J.H."/>
            <person name="Durkin A.S."/>
            <person name="Huot H."/>
            <person name="Shrivastava S."/>
            <person name="Kothari S."/>
            <person name="Dodson R.J."/>
            <person name="Mohamoud Y."/>
            <person name="Khouri H."/>
            <person name="Roesch L.F.W."/>
            <person name="Krogfelt K.A."/>
            <person name="Struve C."/>
            <person name="Triplett E.W."/>
            <person name="Methe B.A."/>
        </authorList>
    </citation>
    <scope>NUCLEOTIDE SEQUENCE [LARGE SCALE GENOMIC DNA]</scope>
    <source>
        <strain>342</strain>
    </source>
</reference>
<comment type="function">
    <text evidence="1">Murein-degrading enzyme. May play a role in recycling of muropeptides during cell elongation and/or cell division. Preferentially cleaves at a distance of more than two disaccharide units from the ends of the glycan chain.</text>
</comment>
<comment type="catalytic activity">
    <reaction evidence="1">
        <text>Endolytic cleavage of the (1-&gt;4)-beta-glycosidic linkage between N-acetylmuramic acid (MurNAc) and N-acetylglucosamine (GlcNAc) residues in peptidoglycan with concomitant formation of a 1,6-anhydrobond in the MurNAc residue.</text>
        <dbReference type="EC" id="4.2.2.n2"/>
    </reaction>
</comment>
<comment type="subcellular location">
    <subcellularLocation>
        <location evidence="1">Cell outer membrane</location>
        <topology evidence="1">Lipid-anchor</topology>
    </subcellularLocation>
</comment>
<comment type="similarity">
    <text evidence="1">Belongs to the transglycosylase Slt family.</text>
</comment>
<accession>B5XQ85</accession>
<feature type="signal peptide" evidence="1">
    <location>
        <begin position="1"/>
        <end position="15"/>
    </location>
</feature>
<feature type="chain" id="PRO_1000144957" description="Endo-type membrane-bound lytic murein transglycosylase A">
    <location>
        <begin position="16"/>
        <end position="203"/>
    </location>
</feature>
<feature type="lipid moiety-binding region" description="N-palmitoyl cysteine" evidence="1">
    <location>
        <position position="16"/>
    </location>
</feature>
<feature type="lipid moiety-binding region" description="S-diacylglycerol cysteine" evidence="1">
    <location>
        <position position="16"/>
    </location>
</feature>
<evidence type="ECO:0000255" key="1">
    <source>
        <dbReference type="HAMAP-Rule" id="MF_01381"/>
    </source>
</evidence>
<dbReference type="EC" id="4.2.2.n2" evidence="1"/>
<dbReference type="EMBL" id="CP000964">
    <property type="protein sequence ID" value="ACI08685.1"/>
    <property type="molecule type" value="Genomic_DNA"/>
</dbReference>
<dbReference type="SMR" id="B5XQ85"/>
<dbReference type="CAZy" id="GH23">
    <property type="family name" value="Glycoside Hydrolase Family 23"/>
</dbReference>
<dbReference type="KEGG" id="kpe:KPK_1989"/>
<dbReference type="HOGENOM" id="CLU_103257_0_0_6"/>
<dbReference type="Proteomes" id="UP000001734">
    <property type="component" value="Chromosome"/>
</dbReference>
<dbReference type="GO" id="GO:0009279">
    <property type="term" value="C:cell outer membrane"/>
    <property type="evidence" value="ECO:0007669"/>
    <property type="project" value="UniProtKB-SubCell"/>
</dbReference>
<dbReference type="GO" id="GO:0008932">
    <property type="term" value="F:lytic endotransglycosylase activity"/>
    <property type="evidence" value="ECO:0007669"/>
    <property type="project" value="InterPro"/>
</dbReference>
<dbReference type="GO" id="GO:0016998">
    <property type="term" value="P:cell wall macromolecule catabolic process"/>
    <property type="evidence" value="ECO:0007669"/>
    <property type="project" value="UniProtKB-UniRule"/>
</dbReference>
<dbReference type="GO" id="GO:0071555">
    <property type="term" value="P:cell wall organization"/>
    <property type="evidence" value="ECO:0007669"/>
    <property type="project" value="UniProtKB-KW"/>
</dbReference>
<dbReference type="GO" id="GO:0000270">
    <property type="term" value="P:peptidoglycan metabolic process"/>
    <property type="evidence" value="ECO:0007669"/>
    <property type="project" value="InterPro"/>
</dbReference>
<dbReference type="CDD" id="cd16893">
    <property type="entry name" value="LT_MltC_MltE"/>
    <property type="match status" value="1"/>
</dbReference>
<dbReference type="Gene3D" id="1.10.530.10">
    <property type="match status" value="1"/>
</dbReference>
<dbReference type="HAMAP" id="MF_01381">
    <property type="entry name" value="EmtA"/>
    <property type="match status" value="1"/>
</dbReference>
<dbReference type="InterPro" id="IPR023946">
    <property type="entry name" value="EmtA"/>
</dbReference>
<dbReference type="InterPro" id="IPR023346">
    <property type="entry name" value="Lysozyme-like_dom_sf"/>
</dbReference>
<dbReference type="InterPro" id="IPR000189">
    <property type="entry name" value="Transglyc_AS"/>
</dbReference>
<dbReference type="InterPro" id="IPR008258">
    <property type="entry name" value="Transglycosylase_SLT_dom_1"/>
</dbReference>
<dbReference type="NCBIfam" id="NF012014">
    <property type="entry name" value="PRK15470.1"/>
    <property type="match status" value="1"/>
</dbReference>
<dbReference type="PANTHER" id="PTHR37423:SF4">
    <property type="entry name" value="ENDO-TYPE MEMBRANE-BOUND LYTIC MUREIN TRANSGLYCOSYLASE A"/>
    <property type="match status" value="1"/>
</dbReference>
<dbReference type="PANTHER" id="PTHR37423">
    <property type="entry name" value="SOLUBLE LYTIC MUREIN TRANSGLYCOSYLASE-RELATED"/>
    <property type="match status" value="1"/>
</dbReference>
<dbReference type="Pfam" id="PF01464">
    <property type="entry name" value="SLT"/>
    <property type="match status" value="1"/>
</dbReference>
<dbReference type="SUPFAM" id="SSF53955">
    <property type="entry name" value="Lysozyme-like"/>
    <property type="match status" value="1"/>
</dbReference>
<dbReference type="PROSITE" id="PS51257">
    <property type="entry name" value="PROKAR_LIPOPROTEIN"/>
    <property type="match status" value="1"/>
</dbReference>
<dbReference type="PROSITE" id="PS00922">
    <property type="entry name" value="TRANSGLYCOSYLASE"/>
    <property type="match status" value="1"/>
</dbReference>
<name>EMTA_KLEP3</name>
<sequence length="203" mass="22345">MKLRWLLILVVFLAGCSSKHDYTNPPWNPEVPVKRAMQWMPISEKAGAAWGVDPQLITAIIAIESGGNPAVVSKSGAVGLMQLKPSTSGRDVYRRMGWRGEPSVSELKNPERNISMGAAYLSILENGPLAGIKDPQVMRYAVVVSYANGAGALLRTFSSDRQDAIDEINDLDADEFFEHVVKKHPAPQAPRYIWKLQKALDAM</sequence>
<organism>
    <name type="scientific">Klebsiella pneumoniae (strain 342)</name>
    <dbReference type="NCBI Taxonomy" id="507522"/>
    <lineage>
        <taxon>Bacteria</taxon>
        <taxon>Pseudomonadati</taxon>
        <taxon>Pseudomonadota</taxon>
        <taxon>Gammaproteobacteria</taxon>
        <taxon>Enterobacterales</taxon>
        <taxon>Enterobacteriaceae</taxon>
        <taxon>Klebsiella/Raoultella group</taxon>
        <taxon>Klebsiella</taxon>
        <taxon>Klebsiella pneumoniae complex</taxon>
    </lineage>
</organism>
<proteinExistence type="inferred from homology"/>
<keyword id="KW-0998">Cell outer membrane</keyword>
<keyword id="KW-0961">Cell wall biogenesis/degradation</keyword>
<keyword id="KW-0449">Lipoprotein</keyword>
<keyword id="KW-0456">Lyase</keyword>
<keyword id="KW-0472">Membrane</keyword>
<keyword id="KW-0564">Palmitate</keyword>
<keyword id="KW-0732">Signal</keyword>
<gene>
    <name evidence="1" type="primary">emtA</name>
    <name type="ordered locus">KPK_1989</name>
</gene>